<keyword id="KW-1185">Reference proteome</keyword>
<keyword id="KW-0687">Ribonucleoprotein</keyword>
<keyword id="KW-0689">Ribosomal protein</keyword>
<keyword id="KW-0694">RNA-binding</keyword>
<keyword id="KW-0699">rRNA-binding</keyword>
<reference key="1">
    <citation type="journal article" date="2007" name="PLoS Genet.">
        <title>Patterns and implications of gene gain and loss in the evolution of Prochlorococcus.</title>
        <authorList>
            <person name="Kettler G.C."/>
            <person name="Martiny A.C."/>
            <person name="Huang K."/>
            <person name="Zucker J."/>
            <person name="Coleman M.L."/>
            <person name="Rodrigue S."/>
            <person name="Chen F."/>
            <person name="Lapidus A."/>
            <person name="Ferriera S."/>
            <person name="Johnson J."/>
            <person name="Steglich C."/>
            <person name="Church G.M."/>
            <person name="Richardson P."/>
            <person name="Chisholm S.W."/>
        </authorList>
    </citation>
    <scope>NUCLEOTIDE SEQUENCE [LARGE SCALE GENOMIC DNA]</scope>
    <source>
        <strain>MIT 9211</strain>
    </source>
</reference>
<proteinExistence type="inferred from homology"/>
<gene>
    <name evidence="1" type="primary">rplV</name>
    <name evidence="1" type="synonym">rpl22</name>
    <name type="ordered locus">P9211_16731</name>
</gene>
<evidence type="ECO:0000255" key="1">
    <source>
        <dbReference type="HAMAP-Rule" id="MF_01331"/>
    </source>
</evidence>
<evidence type="ECO:0000305" key="2"/>
<feature type="chain" id="PRO_0000354505" description="Large ribosomal subunit protein uL22">
    <location>
        <begin position="1"/>
        <end position="129"/>
    </location>
</feature>
<dbReference type="EMBL" id="CP000878">
    <property type="protein sequence ID" value="ABX09604.1"/>
    <property type="molecule type" value="Genomic_DNA"/>
</dbReference>
<dbReference type="RefSeq" id="WP_012196224.1">
    <property type="nucleotide sequence ID" value="NC_009976.1"/>
</dbReference>
<dbReference type="SMR" id="A9BCP2"/>
<dbReference type="STRING" id="93059.P9211_16731"/>
<dbReference type="KEGG" id="pmj:P9211_16731"/>
<dbReference type="eggNOG" id="COG0091">
    <property type="taxonomic scope" value="Bacteria"/>
</dbReference>
<dbReference type="HOGENOM" id="CLU_083987_3_3_3"/>
<dbReference type="OrthoDB" id="9805969at2"/>
<dbReference type="Proteomes" id="UP000000788">
    <property type="component" value="Chromosome"/>
</dbReference>
<dbReference type="GO" id="GO:0022625">
    <property type="term" value="C:cytosolic large ribosomal subunit"/>
    <property type="evidence" value="ECO:0007669"/>
    <property type="project" value="TreeGrafter"/>
</dbReference>
<dbReference type="GO" id="GO:0019843">
    <property type="term" value="F:rRNA binding"/>
    <property type="evidence" value="ECO:0007669"/>
    <property type="project" value="UniProtKB-UniRule"/>
</dbReference>
<dbReference type="GO" id="GO:0003735">
    <property type="term" value="F:structural constituent of ribosome"/>
    <property type="evidence" value="ECO:0007669"/>
    <property type="project" value="InterPro"/>
</dbReference>
<dbReference type="GO" id="GO:0006412">
    <property type="term" value="P:translation"/>
    <property type="evidence" value="ECO:0007669"/>
    <property type="project" value="UniProtKB-UniRule"/>
</dbReference>
<dbReference type="CDD" id="cd00336">
    <property type="entry name" value="Ribosomal_L22"/>
    <property type="match status" value="1"/>
</dbReference>
<dbReference type="Gene3D" id="3.90.470.10">
    <property type="entry name" value="Ribosomal protein L22/L17"/>
    <property type="match status" value="1"/>
</dbReference>
<dbReference type="HAMAP" id="MF_01331_B">
    <property type="entry name" value="Ribosomal_uL22_B"/>
    <property type="match status" value="1"/>
</dbReference>
<dbReference type="InterPro" id="IPR001063">
    <property type="entry name" value="Ribosomal_uL22"/>
</dbReference>
<dbReference type="InterPro" id="IPR005727">
    <property type="entry name" value="Ribosomal_uL22_bac/chlpt-type"/>
</dbReference>
<dbReference type="InterPro" id="IPR047867">
    <property type="entry name" value="Ribosomal_uL22_bac/org-type"/>
</dbReference>
<dbReference type="InterPro" id="IPR018260">
    <property type="entry name" value="Ribosomal_uL22_CS"/>
</dbReference>
<dbReference type="InterPro" id="IPR036394">
    <property type="entry name" value="Ribosomal_uL22_sf"/>
</dbReference>
<dbReference type="NCBIfam" id="TIGR01044">
    <property type="entry name" value="rplV_bact"/>
    <property type="match status" value="1"/>
</dbReference>
<dbReference type="PANTHER" id="PTHR13501">
    <property type="entry name" value="CHLOROPLAST 50S RIBOSOMAL PROTEIN L22-RELATED"/>
    <property type="match status" value="1"/>
</dbReference>
<dbReference type="PANTHER" id="PTHR13501:SF8">
    <property type="entry name" value="LARGE RIBOSOMAL SUBUNIT PROTEIN UL22M"/>
    <property type="match status" value="1"/>
</dbReference>
<dbReference type="Pfam" id="PF00237">
    <property type="entry name" value="Ribosomal_L22"/>
    <property type="match status" value="1"/>
</dbReference>
<dbReference type="SUPFAM" id="SSF54843">
    <property type="entry name" value="Ribosomal protein L22"/>
    <property type="match status" value="1"/>
</dbReference>
<dbReference type="PROSITE" id="PS00464">
    <property type="entry name" value="RIBOSOMAL_L22"/>
    <property type="match status" value="1"/>
</dbReference>
<comment type="function">
    <text evidence="1">This protein binds specifically to 23S rRNA; its binding is stimulated by other ribosomal proteins, e.g. L4, L17, and L20. It is important during the early stages of 50S assembly. It makes multiple contacts with different domains of the 23S rRNA in the assembled 50S subunit and ribosome (By similarity).</text>
</comment>
<comment type="function">
    <text evidence="1">The globular domain of the protein is located near the polypeptide exit tunnel on the outside of the subunit, while an extended beta-hairpin is found that lines the wall of the exit tunnel in the center of the 70S ribosome.</text>
</comment>
<comment type="subunit">
    <text evidence="1">Part of the 50S ribosomal subunit.</text>
</comment>
<comment type="similarity">
    <text evidence="1">Belongs to the universal ribosomal protein uL22 family.</text>
</comment>
<organism>
    <name type="scientific">Prochlorococcus marinus (strain MIT 9211)</name>
    <dbReference type="NCBI Taxonomy" id="93059"/>
    <lineage>
        <taxon>Bacteria</taxon>
        <taxon>Bacillati</taxon>
        <taxon>Cyanobacteriota</taxon>
        <taxon>Cyanophyceae</taxon>
        <taxon>Synechococcales</taxon>
        <taxon>Prochlorococcaceae</taxon>
        <taxon>Prochlorococcus</taxon>
    </lineage>
</organism>
<accession>A9BCP2</accession>
<sequence length="129" mass="14180">MVESSSSKTKFAQAHGRYIRGSASKVRRVLDQIRGRTYRDALIMLEFMPYRSTGPITKVLRSAVANAENNMGLDPASLVITRATADMAPSMKRYRPRAQGRAFAIKKQTCHISISVAPSSESTNSEASD</sequence>
<protein>
    <recommendedName>
        <fullName evidence="1">Large ribosomal subunit protein uL22</fullName>
    </recommendedName>
    <alternativeName>
        <fullName evidence="2">50S ribosomal protein L22</fullName>
    </alternativeName>
</protein>
<name>RL22_PROM4</name>